<reference key="1">
    <citation type="journal article" date="2004" name="Int. J. Syst. Evol. Microbiol.">
        <title>Postgenomic taxonomy of human ureaplasmas - a case study based on multiple gene sequences.</title>
        <authorList>
            <person name="Kong F."/>
            <person name="Gilbert G.L."/>
        </authorList>
    </citation>
    <scope>NUCLEOTIDE SEQUENCE [GENOMIC DNA]</scope>
</reference>
<reference key="2">
    <citation type="submission" date="2008-10" db="EMBL/GenBank/DDBJ databases">
        <title>Genome sequence of Ureaplasma urealyticum serovar 10 ATCC-33699.</title>
        <authorList>
            <person name="Shrivastava S."/>
            <person name="Methe B.A."/>
            <person name="Glass J."/>
            <person name="White K."/>
            <person name="Duffy L.B."/>
        </authorList>
    </citation>
    <scope>NUCLEOTIDE SEQUENCE [LARGE SCALE GENOMIC DNA]</scope>
    <source>
        <strain>ATCC 33699 / Western</strain>
    </source>
</reference>
<keyword id="KW-0143">Chaperone</keyword>
<keyword id="KW-0963">Cytoplasm</keyword>
<keyword id="KW-0533">Nickel</keyword>
<sequence length="149" mass="17420">MTVFKEILGNITDIENVESYQIENIHLTSDDVLKRVIIISSDQNVEYGIRLEEDKKLRDGDILYKDDYKLVVIRLELSDVLIITARTIGEMAQIAHNLGNRHMPAQFTETQMIVPYDYLVEQYLQDNKALYEREKIKLKEAFRHCSDAK</sequence>
<dbReference type="EMBL" id="AF085726">
    <property type="protein sequence ID" value="AAG10333.1"/>
    <property type="molecule type" value="Genomic_DNA"/>
</dbReference>
<dbReference type="EMBL" id="CP001184">
    <property type="protein sequence ID" value="ACI59853.1"/>
    <property type="molecule type" value="Genomic_DNA"/>
</dbReference>
<dbReference type="RefSeq" id="WP_004026116.1">
    <property type="nucleotide sequence ID" value="NC_011374.1"/>
</dbReference>
<dbReference type="SMR" id="B5ZBS8"/>
<dbReference type="STRING" id="565575.UUR10_0476"/>
<dbReference type="KEGG" id="uue:UUR10_0476"/>
<dbReference type="eggNOG" id="COG2371">
    <property type="taxonomic scope" value="Bacteria"/>
</dbReference>
<dbReference type="HOGENOM" id="CLU_093757_3_1_14"/>
<dbReference type="OrthoDB" id="9810882at2"/>
<dbReference type="Proteomes" id="UP000002018">
    <property type="component" value="Chromosome"/>
</dbReference>
<dbReference type="GO" id="GO:0005737">
    <property type="term" value="C:cytoplasm"/>
    <property type="evidence" value="ECO:0007669"/>
    <property type="project" value="UniProtKB-SubCell"/>
</dbReference>
<dbReference type="GO" id="GO:0016151">
    <property type="term" value="F:nickel cation binding"/>
    <property type="evidence" value="ECO:0007669"/>
    <property type="project" value="UniProtKB-UniRule"/>
</dbReference>
<dbReference type="GO" id="GO:0051082">
    <property type="term" value="F:unfolded protein binding"/>
    <property type="evidence" value="ECO:0007669"/>
    <property type="project" value="UniProtKB-UniRule"/>
</dbReference>
<dbReference type="GO" id="GO:0006457">
    <property type="term" value="P:protein folding"/>
    <property type="evidence" value="ECO:0007669"/>
    <property type="project" value="InterPro"/>
</dbReference>
<dbReference type="GO" id="GO:0065003">
    <property type="term" value="P:protein-containing complex assembly"/>
    <property type="evidence" value="ECO:0007669"/>
    <property type="project" value="InterPro"/>
</dbReference>
<dbReference type="GO" id="GO:0019627">
    <property type="term" value="P:urea metabolic process"/>
    <property type="evidence" value="ECO:0007669"/>
    <property type="project" value="InterPro"/>
</dbReference>
<dbReference type="CDD" id="cd00571">
    <property type="entry name" value="UreE"/>
    <property type="match status" value="1"/>
</dbReference>
<dbReference type="Gene3D" id="2.60.260.20">
    <property type="entry name" value="Urease metallochaperone UreE, N-terminal domain"/>
    <property type="match status" value="1"/>
</dbReference>
<dbReference type="Gene3D" id="3.30.70.790">
    <property type="entry name" value="UreE, C-terminal domain"/>
    <property type="match status" value="1"/>
</dbReference>
<dbReference type="HAMAP" id="MF_00822">
    <property type="entry name" value="UreE"/>
    <property type="match status" value="1"/>
</dbReference>
<dbReference type="InterPro" id="IPR012406">
    <property type="entry name" value="UreE"/>
</dbReference>
<dbReference type="InterPro" id="IPR007864">
    <property type="entry name" value="UreE_C_dom"/>
</dbReference>
<dbReference type="InterPro" id="IPR004029">
    <property type="entry name" value="UreE_N"/>
</dbReference>
<dbReference type="InterPro" id="IPR036118">
    <property type="entry name" value="UreE_N_sf"/>
</dbReference>
<dbReference type="NCBIfam" id="NF010710">
    <property type="entry name" value="PRK14112.1"/>
    <property type="match status" value="1"/>
</dbReference>
<dbReference type="Pfam" id="PF05194">
    <property type="entry name" value="UreE_C"/>
    <property type="match status" value="1"/>
</dbReference>
<dbReference type="Pfam" id="PF02814">
    <property type="entry name" value="UreE_N"/>
    <property type="match status" value="1"/>
</dbReference>
<dbReference type="PIRSF" id="PIRSF036402">
    <property type="entry name" value="Ureas_acces_UreE"/>
    <property type="match status" value="1"/>
</dbReference>
<dbReference type="SMART" id="SM00988">
    <property type="entry name" value="UreE_N"/>
    <property type="match status" value="1"/>
</dbReference>
<dbReference type="SUPFAM" id="SSF69737">
    <property type="entry name" value="Urease metallochaperone UreE, C-terminal domain"/>
    <property type="match status" value="1"/>
</dbReference>
<dbReference type="SUPFAM" id="SSF69287">
    <property type="entry name" value="Urease metallochaperone UreE, N-terminal domain"/>
    <property type="match status" value="1"/>
</dbReference>
<accession>B5ZBS8</accession>
<accession>Q7BSD7</accession>
<accession>Q7BSE1</accession>
<accession>Q7BSE5</accession>
<accession>Q7BSE9</accession>
<accession>Q7BSF3</accession>
<accession>Q7BSF7</accession>
<accession>Q7BSG1</accession>
<accession>Q7BSG5</accession>
<accession>Q7BSG9</accession>
<accession>Q9ETE2</accession>
<evidence type="ECO:0000255" key="1">
    <source>
        <dbReference type="HAMAP-Rule" id="MF_00822"/>
    </source>
</evidence>
<feature type="chain" id="PRO_1000197451" description="Urease accessory protein UreE">
    <location>
        <begin position="1"/>
        <end position="149"/>
    </location>
</feature>
<protein>
    <recommendedName>
        <fullName evidence="1">Urease accessory protein UreE</fullName>
    </recommendedName>
</protein>
<proteinExistence type="inferred from homology"/>
<comment type="function">
    <text evidence="1">Involved in urease metallocenter assembly. Binds nickel. Probably functions as a nickel donor during metallocenter assembly.</text>
</comment>
<comment type="subcellular location">
    <subcellularLocation>
        <location evidence="1">Cytoplasm</location>
    </subcellularLocation>
</comment>
<comment type="similarity">
    <text evidence="1">Belongs to the UreE family.</text>
</comment>
<organism>
    <name type="scientific">Ureaplasma urealyticum serovar 10 (strain ATCC 33699 / Western)</name>
    <dbReference type="NCBI Taxonomy" id="565575"/>
    <lineage>
        <taxon>Bacteria</taxon>
        <taxon>Bacillati</taxon>
        <taxon>Mycoplasmatota</taxon>
        <taxon>Mycoplasmoidales</taxon>
        <taxon>Mycoplasmoidaceae</taxon>
        <taxon>Ureaplasma</taxon>
    </lineage>
</organism>
<name>UREE_UREU1</name>
<gene>
    <name evidence="1" type="primary">ureE</name>
    <name type="ordered locus">UUR10_0476</name>
</gene>